<organism>
    <name type="scientific">Streptococcus pneumoniae (strain Hungary19A-6)</name>
    <dbReference type="NCBI Taxonomy" id="487214"/>
    <lineage>
        <taxon>Bacteria</taxon>
        <taxon>Bacillati</taxon>
        <taxon>Bacillota</taxon>
        <taxon>Bacilli</taxon>
        <taxon>Lactobacillales</taxon>
        <taxon>Streptococcaceae</taxon>
        <taxon>Streptococcus</taxon>
    </lineage>
</organism>
<proteinExistence type="inferred from homology"/>
<comment type="catalytic activity">
    <reaction evidence="1">
        <text>alpha-D-galactose 1-phosphate + UDP-alpha-D-glucose = alpha-D-glucose 1-phosphate + UDP-alpha-D-galactose</text>
        <dbReference type="Rhea" id="RHEA:13989"/>
        <dbReference type="ChEBI" id="CHEBI:58336"/>
        <dbReference type="ChEBI" id="CHEBI:58601"/>
        <dbReference type="ChEBI" id="CHEBI:58885"/>
        <dbReference type="ChEBI" id="CHEBI:66914"/>
        <dbReference type="EC" id="2.7.7.12"/>
    </reaction>
</comment>
<comment type="pathway">
    <text evidence="1">Carbohydrate metabolism; galactose metabolism.</text>
</comment>
<comment type="subcellular location">
    <subcellularLocation>
        <location evidence="1">Cytoplasm</location>
    </subcellularLocation>
</comment>
<comment type="similarity">
    <text evidence="1">Belongs to the galactose-1-phosphate uridylyltransferase type 2 family.</text>
</comment>
<protein>
    <recommendedName>
        <fullName evidence="1">Galactose-1-phosphate uridylyltransferase</fullName>
        <shortName evidence="1">Gal-1-P uridylyltransferase</shortName>
        <ecNumber evidence="1">2.7.7.12</ecNumber>
    </recommendedName>
    <alternativeName>
        <fullName evidence="1">UDP-glucose--hexose-1-phosphate uridylyltransferase</fullName>
    </alternativeName>
</protein>
<reference key="1">
    <citation type="journal article" date="2010" name="Genome Biol.">
        <title>Structure and dynamics of the pan-genome of Streptococcus pneumoniae and closely related species.</title>
        <authorList>
            <person name="Donati C."/>
            <person name="Hiller N.L."/>
            <person name="Tettelin H."/>
            <person name="Muzzi A."/>
            <person name="Croucher N.J."/>
            <person name="Angiuoli S.V."/>
            <person name="Oggioni M."/>
            <person name="Dunning Hotopp J.C."/>
            <person name="Hu F.Z."/>
            <person name="Riley D.R."/>
            <person name="Covacci A."/>
            <person name="Mitchell T.J."/>
            <person name="Bentley S.D."/>
            <person name="Kilian M."/>
            <person name="Ehrlich G.D."/>
            <person name="Rappuoli R."/>
            <person name="Moxon E.R."/>
            <person name="Masignani V."/>
        </authorList>
    </citation>
    <scope>NUCLEOTIDE SEQUENCE [LARGE SCALE GENOMIC DNA]</scope>
    <source>
        <strain>Hungary19A-6</strain>
    </source>
</reference>
<evidence type="ECO:0000255" key="1">
    <source>
        <dbReference type="HAMAP-Rule" id="MF_00571"/>
    </source>
</evidence>
<gene>
    <name evidence="1" type="primary">galT</name>
    <name type="ordered locus">SPH_1968</name>
</gene>
<sequence>MILVDKFVTHVISESSFEEMDRIYLTNRVLARVGEGVLEVETNLDKLIDLKDQLVEEAVRLETIEDSQTAREILGTELMDLVTPCPSQVNRDFWEAYAYSPEQAIEDFYQLSQKNDYIKLKAIAKNIAYRVPSDYGELEITINLSKPEKDPKEIAAAKLVQASNYPQCQLCLENEGYHGRVNHPARTNHRIIRFEMVGQEWGFQYSPYAYFNEHCIFLDGQHRPMAISRQSFERLLAIVEQFPGYFAGSNADLPIVGGSILTHDHYQGGRHVFPMELAPLQKTFRFAGFEQVKAGIIKWPMSVLRLTSDSKEDLINLADKIFQEWRQYSDSSVQILAETDGTPHHTITPIARKRDGQFELDLVLRDNQTSAEHPDGIYHPHKDVQHIKKENIGLIEVMGLAILPPRLKEEVEQVASYLVGEAVTVADYHQEWADQLKSQHPDLTDKEKALAIVKDSVGAIFVRVLEDAGVYKQTEQGQAAFMRFVEQVGISLD</sequence>
<feature type="chain" id="PRO_1000129495" description="Galactose-1-phosphate uridylyltransferase">
    <location>
        <begin position="1"/>
        <end position="493"/>
    </location>
</feature>
<accession>B1I863</accession>
<name>GALT_STRPI</name>
<dbReference type="EC" id="2.7.7.12" evidence="1"/>
<dbReference type="EMBL" id="CP000936">
    <property type="protein sequence ID" value="ACA37395.1"/>
    <property type="molecule type" value="Genomic_DNA"/>
</dbReference>
<dbReference type="RefSeq" id="WP_000604340.1">
    <property type="nucleotide sequence ID" value="NC_010380.1"/>
</dbReference>
<dbReference type="KEGG" id="spv:SPH_1968"/>
<dbReference type="HOGENOM" id="CLU_047799_0_0_9"/>
<dbReference type="UniPathway" id="UPA00214"/>
<dbReference type="Proteomes" id="UP000002163">
    <property type="component" value="Chromosome"/>
</dbReference>
<dbReference type="GO" id="GO:0005737">
    <property type="term" value="C:cytoplasm"/>
    <property type="evidence" value="ECO:0007669"/>
    <property type="project" value="UniProtKB-SubCell"/>
</dbReference>
<dbReference type="GO" id="GO:0008108">
    <property type="term" value="F:UDP-glucose:hexose-1-phosphate uridylyltransferase activity"/>
    <property type="evidence" value="ECO:0007669"/>
    <property type="project" value="UniProtKB-UniRule"/>
</dbReference>
<dbReference type="GO" id="GO:0006012">
    <property type="term" value="P:galactose metabolic process"/>
    <property type="evidence" value="ECO:0007669"/>
    <property type="project" value="UniProtKB-UniRule"/>
</dbReference>
<dbReference type="HAMAP" id="MF_00571">
    <property type="entry name" value="GalP_UDP_trans"/>
    <property type="match status" value="1"/>
</dbReference>
<dbReference type="InterPro" id="IPR000766">
    <property type="entry name" value="GalP_uridyl_Trfase_II"/>
</dbReference>
<dbReference type="InterPro" id="IPR023425">
    <property type="entry name" value="GalP_uridyl_Trfase_II_CS"/>
</dbReference>
<dbReference type="InterPro" id="IPR005850">
    <property type="entry name" value="GalP_Utransf_C"/>
</dbReference>
<dbReference type="InterPro" id="IPR005849">
    <property type="entry name" value="GalP_Utransf_N"/>
</dbReference>
<dbReference type="NCBIfam" id="TIGR01239">
    <property type="entry name" value="galT_2"/>
    <property type="match status" value="1"/>
</dbReference>
<dbReference type="NCBIfam" id="NF003628">
    <property type="entry name" value="PRK05270.1-1"/>
    <property type="match status" value="1"/>
</dbReference>
<dbReference type="NCBIfam" id="NF003629">
    <property type="entry name" value="PRK05270.1-2"/>
    <property type="match status" value="1"/>
</dbReference>
<dbReference type="NCBIfam" id="NF003631">
    <property type="entry name" value="PRK05270.1-5"/>
    <property type="match status" value="1"/>
</dbReference>
<dbReference type="NCBIfam" id="NF003633">
    <property type="entry name" value="PRK05270.2-2"/>
    <property type="match status" value="1"/>
</dbReference>
<dbReference type="PANTHER" id="PTHR39191:SF1">
    <property type="entry name" value="DUF4922 DOMAIN-CONTAINING PROTEIN"/>
    <property type="match status" value="1"/>
</dbReference>
<dbReference type="PANTHER" id="PTHR39191">
    <property type="entry name" value="GALACTOSE-1-PHOSPHATE URIDYLYLTRANSFERASE"/>
    <property type="match status" value="1"/>
</dbReference>
<dbReference type="Pfam" id="PF02744">
    <property type="entry name" value="GalP_UDP_tr_C"/>
    <property type="match status" value="1"/>
</dbReference>
<dbReference type="Pfam" id="PF01087">
    <property type="entry name" value="GalP_UDP_transf"/>
    <property type="match status" value="1"/>
</dbReference>
<dbReference type="PIRSF" id="PIRSF006005">
    <property type="entry name" value="GalT_BS"/>
    <property type="match status" value="1"/>
</dbReference>
<dbReference type="PROSITE" id="PS01163">
    <property type="entry name" value="GAL_P_UDP_TRANSF_II"/>
    <property type="match status" value="1"/>
</dbReference>
<keyword id="KW-0119">Carbohydrate metabolism</keyword>
<keyword id="KW-0963">Cytoplasm</keyword>
<keyword id="KW-0299">Galactose metabolism</keyword>
<keyword id="KW-0548">Nucleotidyltransferase</keyword>
<keyword id="KW-0808">Transferase</keyword>